<protein>
    <recommendedName>
        <fullName evidence="1">Glutamyl-tRNA(Gln) amidotransferase subunit A</fullName>
        <shortName evidence="1">Glu-ADT subunit A</shortName>
        <ecNumber evidence="1">6.3.5.7</ecNumber>
    </recommendedName>
</protein>
<dbReference type="EC" id="6.3.5.7" evidence="1"/>
<dbReference type="EMBL" id="AE017354">
    <property type="protein sequence ID" value="AAU27815.1"/>
    <property type="molecule type" value="Genomic_DNA"/>
</dbReference>
<dbReference type="RefSeq" id="WP_010947462.1">
    <property type="nucleotide sequence ID" value="NC_002942.5"/>
</dbReference>
<dbReference type="RefSeq" id="YP_095762.1">
    <property type="nucleotide sequence ID" value="NC_002942.5"/>
</dbReference>
<dbReference type="SMR" id="Q5ZUQ7"/>
<dbReference type="STRING" id="272624.lpg1736"/>
<dbReference type="PaxDb" id="272624-lpg1736"/>
<dbReference type="GeneID" id="57035725"/>
<dbReference type="KEGG" id="lpn:lpg1736"/>
<dbReference type="PATRIC" id="fig|272624.6.peg.1819"/>
<dbReference type="eggNOG" id="COG0154">
    <property type="taxonomic scope" value="Bacteria"/>
</dbReference>
<dbReference type="HOGENOM" id="CLU_009600_0_3_6"/>
<dbReference type="OrthoDB" id="9811471at2"/>
<dbReference type="Proteomes" id="UP000000609">
    <property type="component" value="Chromosome"/>
</dbReference>
<dbReference type="GO" id="GO:0030956">
    <property type="term" value="C:glutamyl-tRNA(Gln) amidotransferase complex"/>
    <property type="evidence" value="ECO:0007669"/>
    <property type="project" value="InterPro"/>
</dbReference>
<dbReference type="GO" id="GO:0005524">
    <property type="term" value="F:ATP binding"/>
    <property type="evidence" value="ECO:0007669"/>
    <property type="project" value="UniProtKB-KW"/>
</dbReference>
<dbReference type="GO" id="GO:0050567">
    <property type="term" value="F:glutaminyl-tRNA synthase (glutamine-hydrolyzing) activity"/>
    <property type="evidence" value="ECO:0007669"/>
    <property type="project" value="UniProtKB-UniRule"/>
</dbReference>
<dbReference type="GO" id="GO:0006412">
    <property type="term" value="P:translation"/>
    <property type="evidence" value="ECO:0007669"/>
    <property type="project" value="UniProtKB-UniRule"/>
</dbReference>
<dbReference type="Gene3D" id="3.90.1300.10">
    <property type="entry name" value="Amidase signature (AS) domain"/>
    <property type="match status" value="1"/>
</dbReference>
<dbReference type="HAMAP" id="MF_00120">
    <property type="entry name" value="GatA"/>
    <property type="match status" value="1"/>
</dbReference>
<dbReference type="InterPro" id="IPR000120">
    <property type="entry name" value="Amidase"/>
</dbReference>
<dbReference type="InterPro" id="IPR020556">
    <property type="entry name" value="Amidase_CS"/>
</dbReference>
<dbReference type="InterPro" id="IPR023631">
    <property type="entry name" value="Amidase_dom"/>
</dbReference>
<dbReference type="InterPro" id="IPR036928">
    <property type="entry name" value="AS_sf"/>
</dbReference>
<dbReference type="InterPro" id="IPR004412">
    <property type="entry name" value="GatA"/>
</dbReference>
<dbReference type="NCBIfam" id="TIGR00132">
    <property type="entry name" value="gatA"/>
    <property type="match status" value="1"/>
</dbReference>
<dbReference type="PANTHER" id="PTHR11895:SF151">
    <property type="entry name" value="GLUTAMYL-TRNA(GLN) AMIDOTRANSFERASE SUBUNIT A"/>
    <property type="match status" value="1"/>
</dbReference>
<dbReference type="PANTHER" id="PTHR11895">
    <property type="entry name" value="TRANSAMIDASE"/>
    <property type="match status" value="1"/>
</dbReference>
<dbReference type="Pfam" id="PF01425">
    <property type="entry name" value="Amidase"/>
    <property type="match status" value="1"/>
</dbReference>
<dbReference type="SUPFAM" id="SSF75304">
    <property type="entry name" value="Amidase signature (AS) enzymes"/>
    <property type="match status" value="1"/>
</dbReference>
<dbReference type="PROSITE" id="PS00571">
    <property type="entry name" value="AMIDASES"/>
    <property type="match status" value="1"/>
</dbReference>
<keyword id="KW-0067">ATP-binding</keyword>
<keyword id="KW-0436">Ligase</keyword>
<keyword id="KW-0547">Nucleotide-binding</keyword>
<keyword id="KW-0648">Protein biosynthesis</keyword>
<keyword id="KW-1185">Reference proteome</keyword>
<proteinExistence type="inferred from homology"/>
<sequence>MEHYSLAQLSKALHNREFSSVELTQHCINKIQSNKDLNAFISLDEDQALKEAQSADLVLKSGEGKPLTGIPMALKDLFCTKRLNTTCASKMLANFQAPYDATIVTKFKQNGAIIIGKTNMDEFAMGSSNENSYFGSVKNPWDRERVSGGSSGGSAAAVAGNLVPFAIGSDTGGSIRQPAAFCGISGIKPTYGLVSRYGMVAFASSLDQAGPFAKSAEDLAMILHCMAGFDSKDSTSVDRVIPDYSAEIKNPVDKIRIGLPSCFFQPQVEKGIQDAIHDAVKLFENLGAEIIEIDLKLQPLWVPCYYVIACAEASSNLSRYDGIRFGHRSKSASTLIELITNSRSEGFGNEVKRRILTGTHVLSSGFFDAYYLHAQKVRRLIRDELITTLNSVDVILGPTTPTTAFKLGEKIDDPIQNYLADVFTVAANLAGLPAVSIPTGFENKLPIGLQLMSKHFSENRLLAIAHHYQQHTNWHLANPNKQR</sequence>
<evidence type="ECO:0000255" key="1">
    <source>
        <dbReference type="HAMAP-Rule" id="MF_00120"/>
    </source>
</evidence>
<comment type="function">
    <text evidence="1">Allows the formation of correctly charged Gln-tRNA(Gln) through the transamidation of misacylated Glu-tRNA(Gln) in organisms which lack glutaminyl-tRNA synthetase. The reaction takes place in the presence of glutamine and ATP through an activated gamma-phospho-Glu-tRNA(Gln).</text>
</comment>
<comment type="catalytic activity">
    <reaction evidence="1">
        <text>L-glutamyl-tRNA(Gln) + L-glutamine + ATP + H2O = L-glutaminyl-tRNA(Gln) + L-glutamate + ADP + phosphate + H(+)</text>
        <dbReference type="Rhea" id="RHEA:17521"/>
        <dbReference type="Rhea" id="RHEA-COMP:9681"/>
        <dbReference type="Rhea" id="RHEA-COMP:9684"/>
        <dbReference type="ChEBI" id="CHEBI:15377"/>
        <dbReference type="ChEBI" id="CHEBI:15378"/>
        <dbReference type="ChEBI" id="CHEBI:29985"/>
        <dbReference type="ChEBI" id="CHEBI:30616"/>
        <dbReference type="ChEBI" id="CHEBI:43474"/>
        <dbReference type="ChEBI" id="CHEBI:58359"/>
        <dbReference type="ChEBI" id="CHEBI:78520"/>
        <dbReference type="ChEBI" id="CHEBI:78521"/>
        <dbReference type="ChEBI" id="CHEBI:456216"/>
        <dbReference type="EC" id="6.3.5.7"/>
    </reaction>
</comment>
<comment type="subunit">
    <text evidence="1">Heterotrimer of A, B and C subunits.</text>
</comment>
<comment type="similarity">
    <text evidence="1">Belongs to the amidase family. GatA subfamily.</text>
</comment>
<organism>
    <name type="scientific">Legionella pneumophila subsp. pneumophila (strain Philadelphia 1 / ATCC 33152 / DSM 7513)</name>
    <dbReference type="NCBI Taxonomy" id="272624"/>
    <lineage>
        <taxon>Bacteria</taxon>
        <taxon>Pseudomonadati</taxon>
        <taxon>Pseudomonadota</taxon>
        <taxon>Gammaproteobacteria</taxon>
        <taxon>Legionellales</taxon>
        <taxon>Legionellaceae</taxon>
        <taxon>Legionella</taxon>
    </lineage>
</organism>
<name>GATA_LEGPH</name>
<gene>
    <name evidence="1" type="primary">gatA</name>
    <name type="ordered locus">lpg1736</name>
</gene>
<accession>Q5ZUQ7</accession>
<feature type="chain" id="PRO_0000241114" description="Glutamyl-tRNA(Gln) amidotransferase subunit A">
    <location>
        <begin position="1"/>
        <end position="483"/>
    </location>
</feature>
<feature type="active site" description="Charge relay system" evidence="1">
    <location>
        <position position="75"/>
    </location>
</feature>
<feature type="active site" description="Charge relay system" evidence="1">
    <location>
        <position position="150"/>
    </location>
</feature>
<feature type="active site" description="Acyl-ester intermediate" evidence="1">
    <location>
        <position position="174"/>
    </location>
</feature>
<reference key="1">
    <citation type="journal article" date="2004" name="Science">
        <title>The genomic sequence of the accidental pathogen Legionella pneumophila.</title>
        <authorList>
            <person name="Chien M."/>
            <person name="Morozova I."/>
            <person name="Shi S."/>
            <person name="Sheng H."/>
            <person name="Chen J."/>
            <person name="Gomez S.M."/>
            <person name="Asamani G."/>
            <person name="Hill K."/>
            <person name="Nuara J."/>
            <person name="Feder M."/>
            <person name="Rineer J."/>
            <person name="Greenberg J.J."/>
            <person name="Steshenko V."/>
            <person name="Park S.H."/>
            <person name="Zhao B."/>
            <person name="Teplitskaya E."/>
            <person name="Edwards J.R."/>
            <person name="Pampou S."/>
            <person name="Georghiou A."/>
            <person name="Chou I.-C."/>
            <person name="Iannuccilli W."/>
            <person name="Ulz M.E."/>
            <person name="Kim D.H."/>
            <person name="Geringer-Sameth A."/>
            <person name="Goldsberry C."/>
            <person name="Morozov P."/>
            <person name="Fischer S.G."/>
            <person name="Segal G."/>
            <person name="Qu X."/>
            <person name="Rzhetsky A."/>
            <person name="Zhang P."/>
            <person name="Cayanis E."/>
            <person name="De Jong P.J."/>
            <person name="Ju J."/>
            <person name="Kalachikov S."/>
            <person name="Shuman H.A."/>
            <person name="Russo J.J."/>
        </authorList>
    </citation>
    <scope>NUCLEOTIDE SEQUENCE [LARGE SCALE GENOMIC DNA]</scope>
    <source>
        <strain>Philadelphia 1 / ATCC 33152 / DSM 7513</strain>
    </source>
</reference>